<feature type="chain" id="PRO_1000073277" description="Large ribosomal subunit protein uL22">
    <location>
        <begin position="1"/>
        <end position="147"/>
    </location>
</feature>
<feature type="region of interest" description="Disordered" evidence="2">
    <location>
        <begin position="110"/>
        <end position="147"/>
    </location>
</feature>
<feature type="compositionally biased region" description="Low complexity" evidence="2">
    <location>
        <begin position="117"/>
        <end position="140"/>
    </location>
</feature>
<proteinExistence type="inferred from homology"/>
<dbReference type="EMBL" id="CP000814">
    <property type="protein sequence ID" value="ABV53203.1"/>
    <property type="molecule type" value="Genomic_DNA"/>
</dbReference>
<dbReference type="RefSeq" id="WP_002877012.1">
    <property type="nucleotide sequence ID" value="NC_009839.1"/>
</dbReference>
<dbReference type="SMR" id="A8FP16"/>
<dbReference type="KEGG" id="cju:C8J_1606"/>
<dbReference type="HOGENOM" id="CLU_083987_3_2_7"/>
<dbReference type="GO" id="GO:0022625">
    <property type="term" value="C:cytosolic large ribosomal subunit"/>
    <property type="evidence" value="ECO:0007669"/>
    <property type="project" value="TreeGrafter"/>
</dbReference>
<dbReference type="GO" id="GO:0019843">
    <property type="term" value="F:rRNA binding"/>
    <property type="evidence" value="ECO:0007669"/>
    <property type="project" value="UniProtKB-UniRule"/>
</dbReference>
<dbReference type="GO" id="GO:0003735">
    <property type="term" value="F:structural constituent of ribosome"/>
    <property type="evidence" value="ECO:0007669"/>
    <property type="project" value="InterPro"/>
</dbReference>
<dbReference type="GO" id="GO:0006412">
    <property type="term" value="P:translation"/>
    <property type="evidence" value="ECO:0007669"/>
    <property type="project" value="UniProtKB-UniRule"/>
</dbReference>
<dbReference type="CDD" id="cd00336">
    <property type="entry name" value="Ribosomal_L22"/>
    <property type="match status" value="1"/>
</dbReference>
<dbReference type="FunFam" id="3.90.470.10:FF:000007">
    <property type="entry name" value="50S ribosomal protein L22"/>
    <property type="match status" value="1"/>
</dbReference>
<dbReference type="Gene3D" id="3.90.470.10">
    <property type="entry name" value="Ribosomal protein L22/L17"/>
    <property type="match status" value="1"/>
</dbReference>
<dbReference type="HAMAP" id="MF_01331_B">
    <property type="entry name" value="Ribosomal_uL22_B"/>
    <property type="match status" value="1"/>
</dbReference>
<dbReference type="InterPro" id="IPR001063">
    <property type="entry name" value="Ribosomal_uL22"/>
</dbReference>
<dbReference type="InterPro" id="IPR005727">
    <property type="entry name" value="Ribosomal_uL22_bac/chlpt-type"/>
</dbReference>
<dbReference type="InterPro" id="IPR047867">
    <property type="entry name" value="Ribosomal_uL22_bac/org-type"/>
</dbReference>
<dbReference type="InterPro" id="IPR018260">
    <property type="entry name" value="Ribosomal_uL22_CS"/>
</dbReference>
<dbReference type="InterPro" id="IPR036394">
    <property type="entry name" value="Ribosomal_uL22_sf"/>
</dbReference>
<dbReference type="NCBIfam" id="TIGR01044">
    <property type="entry name" value="rplV_bact"/>
    <property type="match status" value="1"/>
</dbReference>
<dbReference type="PANTHER" id="PTHR13501">
    <property type="entry name" value="CHLOROPLAST 50S RIBOSOMAL PROTEIN L22-RELATED"/>
    <property type="match status" value="1"/>
</dbReference>
<dbReference type="PANTHER" id="PTHR13501:SF8">
    <property type="entry name" value="LARGE RIBOSOMAL SUBUNIT PROTEIN UL22M"/>
    <property type="match status" value="1"/>
</dbReference>
<dbReference type="Pfam" id="PF00237">
    <property type="entry name" value="Ribosomal_L22"/>
    <property type="match status" value="1"/>
</dbReference>
<dbReference type="SUPFAM" id="SSF54843">
    <property type="entry name" value="Ribosomal protein L22"/>
    <property type="match status" value="1"/>
</dbReference>
<dbReference type="PROSITE" id="PS00464">
    <property type="entry name" value="RIBOSOMAL_L22"/>
    <property type="match status" value="1"/>
</dbReference>
<organism>
    <name type="scientific">Campylobacter jejuni subsp. jejuni serotype O:6 (strain 81116 / NCTC 11828)</name>
    <dbReference type="NCBI Taxonomy" id="407148"/>
    <lineage>
        <taxon>Bacteria</taxon>
        <taxon>Pseudomonadati</taxon>
        <taxon>Campylobacterota</taxon>
        <taxon>Epsilonproteobacteria</taxon>
        <taxon>Campylobacterales</taxon>
        <taxon>Campylobacteraceae</taxon>
        <taxon>Campylobacter</taxon>
    </lineage>
</organism>
<sequence>MSKALIKFIRLSPTKARLIAREVQGMNAELAMASLKFMPNKGAKYIANAISSAVANGGFEANEVIVKSCRVDAAAVLKRFRPRARGSASRIRKPTSHILVEVAKAEVKAEEKKTVAKKAPAAKKTTTTKAPAKKTTSTKKATAKKES</sequence>
<comment type="function">
    <text evidence="1">This protein binds specifically to 23S rRNA; its binding is stimulated by other ribosomal proteins, e.g. L4, L17, and L20. It is important during the early stages of 50S assembly. It makes multiple contacts with different domains of the 23S rRNA in the assembled 50S subunit and ribosome (By similarity).</text>
</comment>
<comment type="function">
    <text evidence="1">The globular domain of the protein is located near the polypeptide exit tunnel on the outside of the subunit, while an extended beta-hairpin is found that lines the wall of the exit tunnel in the center of the 70S ribosome.</text>
</comment>
<comment type="subunit">
    <text evidence="1">Part of the 50S ribosomal subunit.</text>
</comment>
<comment type="similarity">
    <text evidence="1">Belongs to the universal ribosomal protein uL22 family.</text>
</comment>
<reference key="1">
    <citation type="journal article" date="2007" name="J. Bacteriol.">
        <title>The complete genome sequence of Campylobacter jejuni strain 81116 (NCTC11828).</title>
        <authorList>
            <person name="Pearson B.M."/>
            <person name="Gaskin D.J.H."/>
            <person name="Segers R.P.A.M."/>
            <person name="Wells J.M."/>
            <person name="Nuijten P.J.M."/>
            <person name="van Vliet A.H.M."/>
        </authorList>
    </citation>
    <scope>NUCLEOTIDE SEQUENCE [LARGE SCALE GENOMIC DNA]</scope>
    <source>
        <strain>81116 / NCTC 11828</strain>
    </source>
</reference>
<evidence type="ECO:0000255" key="1">
    <source>
        <dbReference type="HAMAP-Rule" id="MF_01331"/>
    </source>
</evidence>
<evidence type="ECO:0000256" key="2">
    <source>
        <dbReference type="SAM" id="MobiDB-lite"/>
    </source>
</evidence>
<evidence type="ECO:0000305" key="3"/>
<accession>A8FP16</accession>
<gene>
    <name evidence="1" type="primary">rplV</name>
    <name type="ordered locus">C8J_1606</name>
</gene>
<protein>
    <recommendedName>
        <fullName evidence="1">Large ribosomal subunit protein uL22</fullName>
    </recommendedName>
    <alternativeName>
        <fullName evidence="3">50S ribosomal protein L22</fullName>
    </alternativeName>
</protein>
<name>RL22_CAMJ8</name>
<keyword id="KW-0687">Ribonucleoprotein</keyword>
<keyword id="KW-0689">Ribosomal protein</keyword>
<keyword id="KW-0694">RNA-binding</keyword>
<keyword id="KW-0699">rRNA-binding</keyword>